<protein>
    <recommendedName>
        <fullName evidence="9">Protein DECREASED SIZE EXCLUSION LIMIT 1</fullName>
        <shortName evidence="9">AtDSE1</shortName>
    </recommendedName>
    <alternativeName>
        <fullName evidence="8">Protein ALUMINUM TOLERANT 2</fullName>
    </alternativeName>
    <alternativeName>
        <fullName evidence="6">Protein EMBRYO DEFECTIVE 2757</fullName>
    </alternativeName>
    <alternativeName>
        <fullName evidence="7">Protein TANMEI</fullName>
    </alternativeName>
</protein>
<reference key="1">
    <citation type="journal article" date="2005" name="Plant Physiol.">
        <title>TANMEI/EMB2757 encodes a WD repeat protein required for embryo development in Arabidopsis.</title>
        <authorList>
            <person name="Yamagishi K."/>
            <person name="Nagata N."/>
            <person name="Yee K.M."/>
            <person name="Braybrook S.A."/>
            <person name="Pelletier J."/>
            <person name="Fujioka S."/>
            <person name="Yoshida S."/>
            <person name="Fischer R.L."/>
            <person name="Goldberg R.B."/>
            <person name="Harada J.J."/>
        </authorList>
    </citation>
    <scope>NUCLEOTIDE SEQUENCE [MRNA]</scope>
    <scope>FUNCTION</scope>
    <scope>DISRUPTION PHENOTYPE</scope>
    <scope>TISSUE SPECIFICITY</scope>
    <scope>DEVELOPMENTAL STAGE</scope>
    <source>
        <strain>cv. Columbia</strain>
        <strain>cv. Wassilewskija</strain>
    </source>
</reference>
<reference key="2">
    <citation type="journal article" date="1999" name="Nature">
        <title>Sequence and analysis of chromosome 4 of the plant Arabidopsis thaliana.</title>
        <authorList>
            <person name="Mayer K.F.X."/>
            <person name="Schueller C."/>
            <person name="Wambutt R."/>
            <person name="Murphy G."/>
            <person name="Volckaert G."/>
            <person name="Pohl T."/>
            <person name="Duesterhoeft A."/>
            <person name="Stiekema W."/>
            <person name="Entian K.-D."/>
            <person name="Terryn N."/>
            <person name="Harris B."/>
            <person name="Ansorge W."/>
            <person name="Brandt P."/>
            <person name="Grivell L.A."/>
            <person name="Rieger M."/>
            <person name="Weichselgartner M."/>
            <person name="de Simone V."/>
            <person name="Obermaier B."/>
            <person name="Mache R."/>
            <person name="Mueller M."/>
            <person name="Kreis M."/>
            <person name="Delseny M."/>
            <person name="Puigdomenech P."/>
            <person name="Watson M."/>
            <person name="Schmidtheini T."/>
            <person name="Reichert B."/>
            <person name="Portetelle D."/>
            <person name="Perez-Alonso M."/>
            <person name="Boutry M."/>
            <person name="Bancroft I."/>
            <person name="Vos P."/>
            <person name="Hoheisel J."/>
            <person name="Zimmermann W."/>
            <person name="Wedler H."/>
            <person name="Ridley P."/>
            <person name="Langham S.-A."/>
            <person name="McCullagh B."/>
            <person name="Bilham L."/>
            <person name="Robben J."/>
            <person name="van der Schueren J."/>
            <person name="Grymonprez B."/>
            <person name="Chuang Y.-J."/>
            <person name="Vandenbussche F."/>
            <person name="Braeken M."/>
            <person name="Weltjens I."/>
            <person name="Voet M."/>
            <person name="Bastiaens I."/>
            <person name="Aert R."/>
            <person name="Defoor E."/>
            <person name="Weitzenegger T."/>
            <person name="Bothe G."/>
            <person name="Ramsperger U."/>
            <person name="Hilbert H."/>
            <person name="Braun M."/>
            <person name="Holzer E."/>
            <person name="Brandt A."/>
            <person name="Peters S."/>
            <person name="van Staveren M."/>
            <person name="Dirkse W."/>
            <person name="Mooijman P."/>
            <person name="Klein Lankhorst R."/>
            <person name="Rose M."/>
            <person name="Hauf J."/>
            <person name="Koetter P."/>
            <person name="Berneiser S."/>
            <person name="Hempel S."/>
            <person name="Feldpausch M."/>
            <person name="Lamberth S."/>
            <person name="Van den Daele H."/>
            <person name="De Keyser A."/>
            <person name="Buysshaert C."/>
            <person name="Gielen J."/>
            <person name="Villarroel R."/>
            <person name="De Clercq R."/>
            <person name="van Montagu M."/>
            <person name="Rogers J."/>
            <person name="Cronin A."/>
            <person name="Quail M.A."/>
            <person name="Bray-Allen S."/>
            <person name="Clark L."/>
            <person name="Doggett J."/>
            <person name="Hall S."/>
            <person name="Kay M."/>
            <person name="Lennard N."/>
            <person name="McLay K."/>
            <person name="Mayes R."/>
            <person name="Pettett A."/>
            <person name="Rajandream M.A."/>
            <person name="Lyne M."/>
            <person name="Benes V."/>
            <person name="Rechmann S."/>
            <person name="Borkova D."/>
            <person name="Bloecker H."/>
            <person name="Scharfe M."/>
            <person name="Grimm M."/>
            <person name="Loehnert T.-H."/>
            <person name="Dose S."/>
            <person name="de Haan M."/>
            <person name="Maarse A.C."/>
            <person name="Schaefer M."/>
            <person name="Mueller-Auer S."/>
            <person name="Gabel C."/>
            <person name="Fuchs M."/>
            <person name="Fartmann B."/>
            <person name="Granderath K."/>
            <person name="Dauner D."/>
            <person name="Herzl A."/>
            <person name="Neumann S."/>
            <person name="Argiriou A."/>
            <person name="Vitale D."/>
            <person name="Liguori R."/>
            <person name="Piravandi E."/>
            <person name="Massenet O."/>
            <person name="Quigley F."/>
            <person name="Clabauld G."/>
            <person name="Muendlein A."/>
            <person name="Felber R."/>
            <person name="Schnabl S."/>
            <person name="Hiller R."/>
            <person name="Schmidt W."/>
            <person name="Lecharny A."/>
            <person name="Aubourg S."/>
            <person name="Chefdor F."/>
            <person name="Cooke R."/>
            <person name="Berger C."/>
            <person name="Monfort A."/>
            <person name="Casacuberta E."/>
            <person name="Gibbons T."/>
            <person name="Weber N."/>
            <person name="Vandenbol M."/>
            <person name="Bargues M."/>
            <person name="Terol J."/>
            <person name="Torres A."/>
            <person name="Perez-Perez A."/>
            <person name="Purnelle B."/>
            <person name="Bent E."/>
            <person name="Johnson S."/>
            <person name="Tacon D."/>
            <person name="Jesse T."/>
            <person name="Heijnen L."/>
            <person name="Schwarz S."/>
            <person name="Scholler P."/>
            <person name="Heber S."/>
            <person name="Francs P."/>
            <person name="Bielke C."/>
            <person name="Frishman D."/>
            <person name="Haase D."/>
            <person name="Lemcke K."/>
            <person name="Mewes H.-W."/>
            <person name="Stocker S."/>
            <person name="Zaccaria P."/>
            <person name="Bevan M."/>
            <person name="Wilson R.K."/>
            <person name="de la Bastide M."/>
            <person name="Habermann K."/>
            <person name="Parnell L."/>
            <person name="Dedhia N."/>
            <person name="Gnoj L."/>
            <person name="Schutz K."/>
            <person name="Huang E."/>
            <person name="Spiegel L."/>
            <person name="Sekhon M."/>
            <person name="Murray J."/>
            <person name="Sheet P."/>
            <person name="Cordes M."/>
            <person name="Abu-Threideh J."/>
            <person name="Stoneking T."/>
            <person name="Kalicki J."/>
            <person name="Graves T."/>
            <person name="Harmon G."/>
            <person name="Edwards J."/>
            <person name="Latreille P."/>
            <person name="Courtney L."/>
            <person name="Cloud J."/>
            <person name="Abbott A."/>
            <person name="Scott K."/>
            <person name="Johnson D."/>
            <person name="Minx P."/>
            <person name="Bentley D."/>
            <person name="Fulton B."/>
            <person name="Miller N."/>
            <person name="Greco T."/>
            <person name="Kemp K."/>
            <person name="Kramer J."/>
            <person name="Fulton L."/>
            <person name="Mardis E."/>
            <person name="Dante M."/>
            <person name="Pepin K."/>
            <person name="Hillier L.W."/>
            <person name="Nelson J."/>
            <person name="Spieth J."/>
            <person name="Ryan E."/>
            <person name="Andrews S."/>
            <person name="Geisel C."/>
            <person name="Layman D."/>
            <person name="Du H."/>
            <person name="Ali J."/>
            <person name="Berghoff A."/>
            <person name="Jones K."/>
            <person name="Drone K."/>
            <person name="Cotton M."/>
            <person name="Joshu C."/>
            <person name="Antonoiu B."/>
            <person name="Zidanic M."/>
            <person name="Strong C."/>
            <person name="Sun H."/>
            <person name="Lamar B."/>
            <person name="Yordan C."/>
            <person name="Ma P."/>
            <person name="Zhong J."/>
            <person name="Preston R."/>
            <person name="Vil D."/>
            <person name="Shekher M."/>
            <person name="Matero A."/>
            <person name="Shah R."/>
            <person name="Swaby I.K."/>
            <person name="O'Shaughnessy A."/>
            <person name="Rodriguez M."/>
            <person name="Hoffman J."/>
            <person name="Till S."/>
            <person name="Granat S."/>
            <person name="Shohdy N."/>
            <person name="Hasegawa A."/>
            <person name="Hameed A."/>
            <person name="Lodhi M."/>
            <person name="Johnson A."/>
            <person name="Chen E."/>
            <person name="Marra M.A."/>
            <person name="Martienssen R."/>
            <person name="McCombie W.R."/>
        </authorList>
    </citation>
    <scope>NUCLEOTIDE SEQUENCE [LARGE SCALE GENOMIC DNA]</scope>
    <source>
        <strain>cv. Columbia</strain>
    </source>
</reference>
<reference key="3">
    <citation type="journal article" date="2017" name="Plant J.">
        <title>Araport11: a complete reannotation of the Arabidopsis thaliana reference genome.</title>
        <authorList>
            <person name="Cheng C.Y."/>
            <person name="Krishnakumar V."/>
            <person name="Chan A.P."/>
            <person name="Thibaud-Nissen F."/>
            <person name="Schobel S."/>
            <person name="Town C.D."/>
        </authorList>
    </citation>
    <scope>GENOME REANNOTATION</scope>
    <source>
        <strain>cv. Columbia</strain>
    </source>
</reference>
<reference key="4">
    <citation type="journal article" date="2002" name="Science">
        <title>Functional annotation of a full-length Arabidopsis cDNA collection.</title>
        <authorList>
            <person name="Seki M."/>
            <person name="Narusaka M."/>
            <person name="Kamiya A."/>
            <person name="Ishida J."/>
            <person name="Satou M."/>
            <person name="Sakurai T."/>
            <person name="Nakajima M."/>
            <person name="Enju A."/>
            <person name="Akiyama K."/>
            <person name="Oono Y."/>
            <person name="Muramatsu M."/>
            <person name="Hayashizaki Y."/>
            <person name="Kawai J."/>
            <person name="Carninci P."/>
            <person name="Itoh M."/>
            <person name="Ishii Y."/>
            <person name="Arakawa T."/>
            <person name="Shibata K."/>
            <person name="Shinagawa A."/>
            <person name="Shinozaki K."/>
        </authorList>
    </citation>
    <scope>NUCLEOTIDE SEQUENCE [LARGE SCALE MRNA]</scope>
    <source>
        <strain>cv. Columbia</strain>
    </source>
</reference>
<reference key="5">
    <citation type="submission" date="2004-09" db="EMBL/GenBank/DDBJ databases">
        <title>Large-scale analysis of RIKEN Arabidopsis full-length (RAFL) cDNAs.</title>
        <authorList>
            <person name="Totoki Y."/>
            <person name="Seki M."/>
            <person name="Ishida J."/>
            <person name="Nakajima M."/>
            <person name="Enju A."/>
            <person name="Kamiya A."/>
            <person name="Narusaka M."/>
            <person name="Shin-i T."/>
            <person name="Nakagawa M."/>
            <person name="Sakamoto N."/>
            <person name="Oishi K."/>
            <person name="Kohara Y."/>
            <person name="Kobayashi M."/>
            <person name="Toyoda A."/>
            <person name="Sakaki Y."/>
            <person name="Sakurai T."/>
            <person name="Iida K."/>
            <person name="Akiyama K."/>
            <person name="Satou M."/>
            <person name="Toyoda T."/>
            <person name="Konagaya A."/>
            <person name="Carninci P."/>
            <person name="Kawai J."/>
            <person name="Hayashizaki Y."/>
            <person name="Shinozaki K."/>
        </authorList>
    </citation>
    <scope>NUCLEOTIDE SEQUENCE [LARGE SCALE MRNA]</scope>
    <source>
        <strain>cv. Columbia</strain>
    </source>
</reference>
<reference key="6">
    <citation type="journal article" date="2004" name="Plant Physiol.">
        <title>Identification of genes required for embryo development in Arabidopsis.</title>
        <authorList>
            <person name="Tzafrir I."/>
            <person name="Pena-Muralla R."/>
            <person name="Dickerman A."/>
            <person name="Berg M."/>
            <person name="Rogers R."/>
            <person name="Hutchens S."/>
            <person name="Sweeney T.C."/>
            <person name="McElver J."/>
            <person name="Aux G."/>
            <person name="Patton D."/>
            <person name="Meinke D."/>
        </authorList>
    </citation>
    <scope>FUNCTION</scope>
    <scope>DISRUPTION PHENOTYPE</scope>
</reference>
<reference key="7">
    <citation type="journal article" date="2012" name="Plant Cell">
        <title>The Arabidopsis cell cycle checkpoint regulators TANMEI/ALT2 and ATR mediate the active process of aluminum-dependent root growth inhibition.</title>
        <authorList>
            <person name="Nezames C.D."/>
            <person name="Sjogren C.A."/>
            <person name="Barajas J.F."/>
            <person name="Larsen P.B."/>
        </authorList>
    </citation>
    <scope>FUNCTION</scope>
    <scope>DISRUPTION PHENOTYPE</scope>
    <scope>MUTAGENESIS OF GLY-213 AND GLY-340</scope>
    <scope>TISSUE SPECIFICITY</scope>
    <scope>SUBCELLULAR LOCATION</scope>
    <source>
        <strain>cv. Columbia</strain>
    </source>
</reference>
<reference key="8">
    <citation type="journal article" date="2012" name="Proc. Natl. Acad. Sci. U.S.A.">
        <title>Plasmodesmata formation and cell-to-cell transport are reduced in decreased size exclusion limit 1 during embryogenesis in Arabidopsis.</title>
        <authorList>
            <person name="Xu M."/>
            <person name="Cho E."/>
            <person name="Burch-Smith T.M."/>
            <person name="Zambryski P.C."/>
        </authorList>
    </citation>
    <scope>FUNCTION</scope>
    <scope>DISRUPTION PHENOTYPE</scope>
    <scope>SUBCELLULAR LOCATION</scope>
    <scope>TISSUE SPECIFICITY</scope>
    <scope>DEVELOPMENTAL STAGE</scope>
    <source>
        <strain>cv. Landsberg erecta</strain>
    </source>
</reference>
<evidence type="ECO:0000255" key="1"/>
<evidence type="ECO:0000269" key="2">
    <source>
    </source>
</evidence>
<evidence type="ECO:0000269" key="3">
    <source>
    </source>
</evidence>
<evidence type="ECO:0000269" key="4">
    <source>
    </source>
</evidence>
<evidence type="ECO:0000269" key="5">
    <source>
    </source>
</evidence>
<evidence type="ECO:0000303" key="6">
    <source>
    </source>
</evidence>
<evidence type="ECO:0000303" key="7">
    <source>
    </source>
</evidence>
<evidence type="ECO:0000303" key="8">
    <source>
    </source>
</evidence>
<evidence type="ECO:0000303" key="9">
    <source>
    </source>
</evidence>
<evidence type="ECO:0000305" key="10"/>
<evidence type="ECO:0000312" key="11">
    <source>
        <dbReference type="Araport" id="AT4G29860"/>
    </source>
</evidence>
<evidence type="ECO:0000312" key="12">
    <source>
        <dbReference type="EMBL" id="BAE44475.1"/>
    </source>
</evidence>
<evidence type="ECO:0000312" key="13">
    <source>
        <dbReference type="EMBL" id="CAB43661.1"/>
    </source>
</evidence>
<proteinExistence type="evidence at protein level"/>
<dbReference type="EMBL" id="AB191306">
    <property type="protein sequence ID" value="BAE44475.1"/>
    <property type="molecule type" value="mRNA"/>
</dbReference>
<dbReference type="EMBL" id="AL050352">
    <property type="protein sequence ID" value="CAB43661.1"/>
    <property type="status" value="ALT_SEQ"/>
    <property type="molecule type" value="Genomic_DNA"/>
</dbReference>
<dbReference type="EMBL" id="AL161575">
    <property type="protein sequence ID" value="CAB79744.1"/>
    <property type="status" value="ALT_SEQ"/>
    <property type="molecule type" value="Genomic_DNA"/>
</dbReference>
<dbReference type="EMBL" id="CP002687">
    <property type="protein sequence ID" value="AEE85686.1"/>
    <property type="molecule type" value="Genomic_DNA"/>
</dbReference>
<dbReference type="EMBL" id="AK118989">
    <property type="protein sequence ID" value="BAC43565.1"/>
    <property type="status" value="ALT_SEQ"/>
    <property type="molecule type" value="mRNA"/>
</dbReference>
<dbReference type="EMBL" id="AK176571">
    <property type="protein sequence ID" value="BAD44334.1"/>
    <property type="status" value="ALT_SEQ"/>
    <property type="molecule type" value="mRNA"/>
</dbReference>
<dbReference type="PIR" id="T08547">
    <property type="entry name" value="T08547"/>
</dbReference>
<dbReference type="RefSeq" id="NP_194715.2">
    <property type="nucleotide sequence ID" value="NM_119132.3"/>
</dbReference>
<dbReference type="SMR" id="Q3MV14"/>
<dbReference type="FunCoup" id="Q3MV14">
    <property type="interactions" value="3072"/>
</dbReference>
<dbReference type="STRING" id="3702.Q3MV14"/>
<dbReference type="iPTMnet" id="Q3MV14"/>
<dbReference type="PaxDb" id="3702-AT4G29860.1"/>
<dbReference type="ProteomicsDB" id="224280"/>
<dbReference type="EnsemblPlants" id="AT4G29860.1">
    <property type="protein sequence ID" value="AT4G29860.1"/>
    <property type="gene ID" value="AT4G29860"/>
</dbReference>
<dbReference type="GeneID" id="829108"/>
<dbReference type="Gramene" id="AT4G29860.1">
    <property type="protein sequence ID" value="AT4G29860.1"/>
    <property type="gene ID" value="AT4G29860"/>
</dbReference>
<dbReference type="KEGG" id="ath:AT4G29860"/>
<dbReference type="Araport" id="AT4G29860"/>
<dbReference type="TAIR" id="AT4G29860">
    <property type="gene designation" value="EMB2757"/>
</dbReference>
<dbReference type="eggNOG" id="KOG0322">
    <property type="taxonomic scope" value="Eukaryota"/>
</dbReference>
<dbReference type="HOGENOM" id="CLU_041940_1_0_1"/>
<dbReference type="InParanoid" id="Q3MV14"/>
<dbReference type="OMA" id="YQRQSMQ"/>
<dbReference type="PhylomeDB" id="Q3MV14"/>
<dbReference type="PRO" id="PR:Q3MV14"/>
<dbReference type="Proteomes" id="UP000006548">
    <property type="component" value="Chromosome 4"/>
</dbReference>
<dbReference type="ExpressionAtlas" id="Q3MV14">
    <property type="expression patterns" value="baseline and differential"/>
</dbReference>
<dbReference type="GO" id="GO:0080008">
    <property type="term" value="C:Cul4-RING E3 ubiquitin ligase complex"/>
    <property type="evidence" value="ECO:0000250"/>
    <property type="project" value="TAIR"/>
</dbReference>
<dbReference type="GO" id="GO:0005737">
    <property type="term" value="C:cytoplasm"/>
    <property type="evidence" value="ECO:0000314"/>
    <property type="project" value="UniProtKB"/>
</dbReference>
<dbReference type="GO" id="GO:0005634">
    <property type="term" value="C:nucleus"/>
    <property type="evidence" value="ECO:0000314"/>
    <property type="project" value="UniProtKB"/>
</dbReference>
<dbReference type="GO" id="GO:0048700">
    <property type="term" value="P:acquisition of desiccation tolerance in seed"/>
    <property type="evidence" value="ECO:0000315"/>
    <property type="project" value="TAIR"/>
</dbReference>
<dbReference type="GO" id="GO:0006974">
    <property type="term" value="P:DNA damage response"/>
    <property type="evidence" value="ECO:0000314"/>
    <property type="project" value="UniProtKB"/>
</dbReference>
<dbReference type="GO" id="GO:0031570">
    <property type="term" value="P:DNA integrity checkpoint signaling"/>
    <property type="evidence" value="ECO:0000315"/>
    <property type="project" value="UniProtKB"/>
</dbReference>
<dbReference type="GO" id="GO:0009793">
    <property type="term" value="P:embryo development ending in seed dormancy"/>
    <property type="evidence" value="ECO:0000315"/>
    <property type="project" value="TAIR"/>
</dbReference>
<dbReference type="GO" id="GO:0048481">
    <property type="term" value="P:plant ovule development"/>
    <property type="evidence" value="ECO:0000315"/>
    <property type="project" value="UniProtKB"/>
</dbReference>
<dbReference type="GO" id="GO:0009663">
    <property type="term" value="P:plasmodesma organization"/>
    <property type="evidence" value="ECO:0000315"/>
    <property type="project" value="UniProtKB"/>
</dbReference>
<dbReference type="GO" id="GO:0010497">
    <property type="term" value="P:plasmodesmata-mediated intercellular transport"/>
    <property type="evidence" value="ECO:0000315"/>
    <property type="project" value="UniProtKB"/>
</dbReference>
<dbReference type="GO" id="GO:0009555">
    <property type="term" value="P:pollen development"/>
    <property type="evidence" value="ECO:0000315"/>
    <property type="project" value="UniProtKB"/>
</dbReference>
<dbReference type="GO" id="GO:0051726">
    <property type="term" value="P:regulation of cell cycle"/>
    <property type="evidence" value="ECO:0000315"/>
    <property type="project" value="UniProtKB"/>
</dbReference>
<dbReference type="GO" id="GO:0006282">
    <property type="term" value="P:regulation of DNA repair"/>
    <property type="evidence" value="ECO:0000315"/>
    <property type="project" value="UniProtKB"/>
</dbReference>
<dbReference type="GO" id="GO:2000280">
    <property type="term" value="P:regulation of root development"/>
    <property type="evidence" value="ECO:0000315"/>
    <property type="project" value="UniProtKB"/>
</dbReference>
<dbReference type="GO" id="GO:0010044">
    <property type="term" value="P:response to aluminum ion"/>
    <property type="evidence" value="ECO:0000315"/>
    <property type="project" value="UniProtKB"/>
</dbReference>
<dbReference type="GO" id="GO:0072718">
    <property type="term" value="P:response to cisplatin"/>
    <property type="evidence" value="ECO:0000315"/>
    <property type="project" value="UniProtKB"/>
</dbReference>
<dbReference type="FunFam" id="2.130.10.10:FF:003591">
    <property type="entry name" value="Protein DECREASED SIZE EXCLUSION LIMIT 1"/>
    <property type="match status" value="1"/>
</dbReference>
<dbReference type="Gene3D" id="2.130.10.10">
    <property type="entry name" value="YVTN repeat-like/Quinoprotein amine dehydrogenase"/>
    <property type="match status" value="3"/>
</dbReference>
<dbReference type="InterPro" id="IPR020472">
    <property type="entry name" value="G-protein_beta_WD-40_rep"/>
</dbReference>
<dbReference type="InterPro" id="IPR015943">
    <property type="entry name" value="WD40/YVTN_repeat-like_dom_sf"/>
</dbReference>
<dbReference type="InterPro" id="IPR036322">
    <property type="entry name" value="WD40_repeat_dom_sf"/>
</dbReference>
<dbReference type="InterPro" id="IPR001680">
    <property type="entry name" value="WD40_rpt"/>
</dbReference>
<dbReference type="PANTHER" id="PTHR19854:SF1">
    <property type="entry name" value="GUANINE NUCLEOTIDE-BINDING PROTEIN SUBUNIT BETA-LIKE PROTEIN 1"/>
    <property type="match status" value="1"/>
</dbReference>
<dbReference type="PANTHER" id="PTHR19854">
    <property type="entry name" value="TRANSDUCIN BETA-LIKE 3"/>
    <property type="match status" value="1"/>
</dbReference>
<dbReference type="Pfam" id="PF00400">
    <property type="entry name" value="WD40"/>
    <property type="match status" value="2"/>
</dbReference>
<dbReference type="PRINTS" id="PR00320">
    <property type="entry name" value="GPROTEINBRPT"/>
</dbReference>
<dbReference type="SMART" id="SM00320">
    <property type="entry name" value="WD40"/>
    <property type="match status" value="5"/>
</dbReference>
<dbReference type="SUPFAM" id="SSF50978">
    <property type="entry name" value="WD40 repeat-like"/>
    <property type="match status" value="1"/>
</dbReference>
<dbReference type="PROSITE" id="PS00678">
    <property type="entry name" value="WD_REPEATS_1"/>
    <property type="match status" value="2"/>
</dbReference>
<dbReference type="PROSITE" id="PS50082">
    <property type="entry name" value="WD_REPEATS_2"/>
    <property type="match status" value="2"/>
</dbReference>
<dbReference type="PROSITE" id="PS50294">
    <property type="entry name" value="WD_REPEATS_REGION"/>
    <property type="match status" value="1"/>
</dbReference>
<accession>Q3MV14</accession>
<accession>Q8GW99</accession>
<accession>Q9SZQ7</accession>
<comment type="function">
    <text evidence="2 3 4 5">Involved in the formation of X-, Y-shaped and twinned plasmodesmata (PD), thus modelating PD size exclusion limit and regulating cell-to-cell transport (PubMed:22411811). Cell cycle checkpoint regulator that monitors and responds to DNA damage such as DNA cross-links, and triggers the halt of the cell cycle progression in the presence of DNA cross-linking agents. Mediates the active process of aluminum- (Al) dependent root growth inhibition and thus is required for response to Al toxicity (PubMed:22345493). Required for both early and late phases of embryo development as well as during seedling growth (PubMed:15266054, PubMed:16113228). Essential for signal transduction and development of both male and female organs (PubMed:22411811).</text>
</comment>
<comment type="subcellular location">
    <subcellularLocation>
        <location evidence="4 5">Cytoplasm</location>
    </subcellularLocation>
    <subcellularLocation>
        <location evidence="4 5">Nucleus</location>
    </subcellularLocation>
    <text evidence="4">Translocates from the cytoplasm to the nucleus in response to DNA damage mediated by treatment with AlCl(3), mitomycin C (MMC), or cisplatin (CDDP).</text>
</comment>
<comment type="tissue specificity">
    <text evidence="3 4 5">Expressed at low levels in floral buds, leaves, stems, roots, and siliques, highest levels being in siliques that contain developing seeds.</text>
</comment>
<comment type="developmental stage">
    <text evidence="3 5">Accumulates throughout the embryo and in endosperm (PubMed:16113228). Expressed throughout the plant life cycle, from embryogenesis to seed set. Accumulates in the shoot apex. In roots, confined to the vascular system. In anthers, observed when the filaments start to elongate, and remain expressed in later stages. Constitutively expressed in gynoecia (PubMed:22411811).</text>
</comment>
<comment type="disruption phenotype">
    <text evidence="2 3 4 5">Defects in both embryo and seedling development, and pale yellow seeds. Die as embryos, probably because of intolerance to desiccation and abnormal protein and lipid body accumulation in mature seeds, but immature mutant seeds can be germinated in culture and lead to short life seedlings defective in shoot and root development, with reduced hypocotyls elongation in the dark (PubMed:15266054, PubMed:16113228). Seedlings accumulate less anthocyanin, are intolerant to desiccation, form trichomes on cotyledons, and have reduced accumulation of storage proteins and lipids (PubMed:16113228). Suppressor of the aluminum- (Al) hypersensitive mutant als3-1 that fails to halt root growth after Al exposure, does not accumulate CyclinB1;1 in the root tip, and fails to force differentiation of the quiescent center and is thus highly tolerant to high Al levels (PubMed:22345493). In dse1, reduced plasmodesmata (PD) formation and cell-to-cell transport during embryogenesis, due to reduced PD size exclusion limit. Dse1 embryos are developmentally retarded and accumulate anthocyanin at the junction between the cotyledons and hypocotyls, corresponding to the shoot apical meristem (SAM). Reduced apical dominance leading to the production of small abnormal flowers, often with altered organ numbers. Infertility due in part to the abnormal development of stamen with under-extended anther filaments that don't release pollen, and due in part to abnormal ovules lacking pollen attractiveness (PubMed:22411811).</text>
</comment>
<comment type="miscellaneous">
    <text evidence="7">'Tanmei' means short life in Japanese.</text>
</comment>
<comment type="similarity">
    <text evidence="10">Belongs to the plant DSE1 protein family.</text>
</comment>
<comment type="sequence caution" evidence="10">
    <conflict type="erroneous initiation">
        <sequence resource="EMBL-CDS" id="BAC43565"/>
    </conflict>
    <text>Truncated N-terminus.</text>
</comment>
<comment type="sequence caution" evidence="10">
    <conflict type="frameshift">
        <sequence resource="EMBL-CDS" id="BAC43565"/>
    </conflict>
</comment>
<comment type="sequence caution" evidence="10">
    <conflict type="erroneous initiation">
        <sequence resource="EMBL-CDS" id="BAD44334"/>
    </conflict>
    <text>Truncated N-terminus.</text>
</comment>
<comment type="sequence caution" evidence="10">
    <conflict type="frameshift">
        <sequence resource="EMBL-CDS" id="BAD44334"/>
    </conflict>
</comment>
<comment type="sequence caution" evidence="10">
    <conflict type="erroneous gene model prediction">
        <sequence resource="EMBL-CDS" id="CAB43661"/>
    </conflict>
</comment>
<comment type="sequence caution" evidence="10">
    <conflict type="erroneous gene model prediction">
        <sequence resource="EMBL-CDS" id="CAB79744"/>
    </conflict>
</comment>
<keyword id="KW-0131">Cell cycle</keyword>
<keyword id="KW-0963">Cytoplasm</keyword>
<keyword id="KW-0217">Developmental protein</keyword>
<keyword id="KW-0227">DNA damage</keyword>
<keyword id="KW-0539">Nucleus</keyword>
<keyword id="KW-1185">Reference proteome</keyword>
<keyword id="KW-0677">Repeat</keyword>
<keyword id="KW-0853">WD repeat</keyword>
<organism evidence="12">
    <name type="scientific">Arabidopsis thaliana</name>
    <name type="common">Mouse-ear cress</name>
    <dbReference type="NCBI Taxonomy" id="3702"/>
    <lineage>
        <taxon>Eukaryota</taxon>
        <taxon>Viridiplantae</taxon>
        <taxon>Streptophyta</taxon>
        <taxon>Embryophyta</taxon>
        <taxon>Tracheophyta</taxon>
        <taxon>Spermatophyta</taxon>
        <taxon>Magnoliopsida</taxon>
        <taxon>eudicotyledons</taxon>
        <taxon>Gunneridae</taxon>
        <taxon>Pentapetalae</taxon>
        <taxon>rosids</taxon>
        <taxon>malvids</taxon>
        <taxon>Brassicales</taxon>
        <taxon>Brassicaceae</taxon>
        <taxon>Camelineae</taxon>
        <taxon>Arabidopsis</taxon>
    </lineage>
</organism>
<sequence length="386" mass="41986">MSKRPPPDPVAVLRGHRHSVMDVSFHPSKSLLFTGSADGELRIWDTIQHRAVSSAWAHSRANGVLAVAASPWLGEDKIISQGRDGTVKCWDIEDGGLSRDPLLILETCAYHFCKFSLVKKPKNSLQEAESHSRGCDEQDGGDTCNVQIADDSERSEEDSGLLQDKDHAEGTTFVAVVGEQPTEVEIWDLNTGDKIIQLPQSSPDESPNASTKGRGMCMAVQLFCPPESQGFLHVLAGYEDGSILLWDIRNAKIPLTSVKFHSEPVLSLSVASSCDGGISGGADDKIVMYNLNHSTGSCTIRKEITLERPGVSGTSIRVDGKIAATAGWDHRIRVYNYRKGNALAILKYHRATCNAVSYSPDCELMASASEDATVALWKLYPPHKSL</sequence>
<name>DSE1_ARATH</name>
<feature type="chain" id="PRO_0000432850" description="Protein DECREASED SIZE EXCLUSION LIMIT 1">
    <location>
        <begin position="1"/>
        <end position="386"/>
    </location>
</feature>
<feature type="repeat" description="WD 1" evidence="1">
    <location>
        <begin position="15"/>
        <end position="54"/>
    </location>
</feature>
<feature type="repeat" description="WD 2" evidence="1">
    <location>
        <begin position="62"/>
        <end position="100"/>
    </location>
</feature>
<feature type="repeat" description="WD 3" evidence="1">
    <location>
        <begin position="157"/>
        <end position="197"/>
    </location>
</feature>
<feature type="repeat" description="WD 4" evidence="1">
    <location>
        <begin position="213"/>
        <end position="256"/>
    </location>
</feature>
<feature type="repeat" description="WD 5" evidence="1">
    <location>
        <begin position="260"/>
        <end position="299"/>
    </location>
</feature>
<feature type="repeat" description="WD 6" evidence="1">
    <location>
        <begin position="306"/>
        <end position="347"/>
    </location>
</feature>
<feature type="repeat" description="WD 7" evidence="1">
    <location>
        <begin position="348"/>
        <end position="386"/>
    </location>
</feature>
<feature type="mutagenesis site" description="In alt2-2; severely sensitive to DNA cross-linking agents, enhanced tolerance to aluminum (Al), but impaired halting root growth in response to Al toxicity." evidence="4">
    <original>G</original>
    <variation>E</variation>
    <location>
        <position position="213"/>
    </location>
</feature>
<feature type="mutagenesis site" description="In alt2-1; severely sensitive to the intrastrand DNA cross-linking agent cisplatin (CDDP) and to the DNA cross-linking agent mitomycin C (MMC), enhanced tolerance to aluminum (Al), but impaired halting root growth in response to Al toxicity. Fails to halt cell cycle progression in the presence of DNA cross-linking agents." evidence="4">
    <original>G</original>
    <variation>R</variation>
    <location>
        <position position="340"/>
    </location>
</feature>
<gene>
    <name evidence="9" type="primary">DSE1</name>
    <name evidence="8" type="synonym">ALT2</name>
    <name evidence="6" type="synonym">EMB2757</name>
    <name evidence="7" type="synonym">TAN</name>
    <name evidence="11" type="ordered locus">At4g29860</name>
    <name evidence="13" type="ORF">F27B13.100</name>
</gene>